<accession>C0HJQ3</accession>
<sequence>MSGRGKTGGKARAKAKTRSSRAGLQFPVGRVHRLLRKGNYAQRVGAGAPVYLILELAGNAARDNKKTRIIPRHLQL</sequence>
<name>H2A_ACIGU</name>
<reference evidence="8" key="1">
    <citation type="journal article" date="2014" name="Acta Naturae">
        <title>Acipensins - novel antimicrobial peptides from leukocytes of the Russian sturgeon Acipenser gueldenstaedtii.</title>
        <authorList>
            <person name="Shamova O.V."/>
            <person name="Orlov D.S."/>
            <person name="Balandin S.V."/>
            <person name="Shramova E.I."/>
            <person name="Tsvetkova E.V."/>
            <person name="Panteleev P.V."/>
            <person name="Leonova Y.F."/>
            <person name="Tagaev A.A."/>
            <person name="Kokryakov V.N."/>
            <person name="Ovchinnikova T.V."/>
        </authorList>
    </citation>
    <scope>PROTEIN SEQUENCE OF 2-76</scope>
    <scope>FUNCTION OF ACIPENSINS</scope>
    <scope>MASS SPECTROMETRY</scope>
    <scope>ACETYLATION AT SER-2</scope>
    <source>
        <tissue evidence="7">Leukocyte</tissue>
    </source>
</reference>
<keyword id="KW-0007">Acetylation</keyword>
<keyword id="KW-0044">Antibiotic</keyword>
<keyword id="KW-0929">Antimicrobial</keyword>
<keyword id="KW-0158">Chromosome</keyword>
<keyword id="KW-0903">Direct protein sequencing</keyword>
<keyword id="KW-0295">Fungicide</keyword>
<keyword id="KW-0379">Hydroxylation</keyword>
<keyword id="KW-0391">Immunity</keyword>
<keyword id="KW-1017">Isopeptide bond</keyword>
<keyword id="KW-0539">Nucleus</keyword>
<keyword id="KW-0597">Phosphoprotein</keyword>
<keyword id="KW-0832">Ubl conjugation</keyword>
<feature type="initiator methionine" description="Removed" evidence="1">
    <location>
        <position position="1"/>
    </location>
</feature>
<feature type="chain" id="PRO_0000432406" description="Histone H2A" evidence="6">
    <location>
        <begin position="2"/>
        <end position="76" status="greater than"/>
    </location>
</feature>
<feature type="peptide" id="PRO_0000432407" description="Acipensin 5" evidence="6">
    <location>
        <begin position="2"/>
        <end position="52"/>
    </location>
</feature>
<feature type="peptide" id="PRO_0000432408" description="Acipensin 1" evidence="6">
    <location>
        <begin position="2"/>
        <end position="51"/>
    </location>
</feature>
<feature type="peptide" id="PRO_0000432409" description="Acipensin 3" evidence="6">
    <location>
        <begin position="2"/>
        <end position="50"/>
    </location>
</feature>
<feature type="peptide" id="PRO_0000432410" description="Acipensin 4" evidence="6">
    <location>
        <begin position="2"/>
        <end position="47"/>
    </location>
</feature>
<feature type="peptide" id="PRO_0000432411" description="Acipensin 2" evidence="6">
    <location>
        <begin position="2"/>
        <end position="36"/>
    </location>
</feature>
<feature type="peptide" id="PRO_0000432412" description="Acipensin 6" evidence="6">
    <location>
        <begin position="53"/>
        <end position="76"/>
    </location>
</feature>
<feature type="region of interest" description="Disordered" evidence="5">
    <location>
        <begin position="1"/>
        <end position="23"/>
    </location>
</feature>
<feature type="compositionally biased region" description="Basic residues" evidence="5">
    <location>
        <begin position="7"/>
        <end position="19"/>
    </location>
</feature>
<feature type="modified residue" description="N-acetylserine; in acipensins" evidence="6">
    <location>
        <position position="2"/>
    </location>
</feature>
<feature type="modified residue" description="N-acetylserine; in histone H2A" evidence="1">
    <location>
        <position position="2"/>
    </location>
</feature>
<feature type="modified residue" description="Phosphoserine; in histone H2A" evidence="1">
    <location>
        <position position="2"/>
    </location>
</feature>
<feature type="modified residue" description="N6-(2-hydroxyisobutyryl)lysine" evidence="4">
    <location>
        <position position="6"/>
    </location>
</feature>
<feature type="modified residue" description="N6-acetyllysine; in histone H2A" evidence="1">
    <location>
        <position position="6"/>
    </location>
</feature>
<feature type="modified residue" description="N6-(2-hydroxyisobutyryl)lysine; alternate" evidence="4">
    <location>
        <position position="10"/>
    </location>
</feature>
<feature type="modified residue" description="N6-lactoyllysine; alternate" evidence="3">
    <location>
        <position position="10"/>
    </location>
</feature>
<feature type="modified residue" description="N6-succinyllysine" evidence="4">
    <location>
        <position position="10"/>
    </location>
</feature>
<feature type="modified residue" description="N6-(2-hydroxyisobutyryl)lysine; alternate" evidence="4">
    <location>
        <position position="37"/>
    </location>
</feature>
<feature type="modified residue" description="N6-(2-hydroxyisobutyryl)lysine" evidence="4">
    <location>
        <position position="65"/>
    </location>
</feature>
<feature type="modified residue" description="N6-(2-hydroxyisobutyryl)lysine" evidence="4">
    <location>
        <position position="66"/>
    </location>
</feature>
<feature type="cross-link" description="Glycyl lysine isopeptide (Lys-Gly) (interchain with G-Cter in ubiquitin); in histone H2A" evidence="2">
    <location>
        <position position="14"/>
    </location>
</feature>
<feature type="cross-link" description="Glycyl lysine isopeptide (Lys-Gly) (interchain with G-Cter in ubiquitin); in histone H2A" evidence="2">
    <location>
        <position position="16"/>
    </location>
</feature>
<feature type="non-consecutive residues" evidence="7">
    <location>
        <begin position="52"/>
        <end position="53"/>
    </location>
</feature>
<feature type="non-terminal residue" evidence="7">
    <location>
        <position position="76"/>
    </location>
</feature>
<evidence type="ECO:0000250" key="1">
    <source>
        <dbReference type="UniProtKB" id="P02264"/>
    </source>
</evidence>
<evidence type="ECO:0000250" key="2">
    <source>
        <dbReference type="UniProtKB" id="P04908"/>
    </source>
</evidence>
<evidence type="ECO:0000250" key="3">
    <source>
        <dbReference type="UniProtKB" id="P0C0S5"/>
    </source>
</evidence>
<evidence type="ECO:0000250" key="4">
    <source>
        <dbReference type="UniProtKB" id="P0C0S8"/>
    </source>
</evidence>
<evidence type="ECO:0000256" key="5">
    <source>
        <dbReference type="SAM" id="MobiDB-lite"/>
    </source>
</evidence>
<evidence type="ECO:0000269" key="6">
    <source>
    </source>
</evidence>
<evidence type="ECO:0000303" key="7">
    <source>
    </source>
</evidence>
<evidence type="ECO:0000305" key="8"/>
<comment type="function">
    <text evidence="8">Core component of nucleosome. Nucleosomes wrap and compact DNA into chromatin, limiting DNA accessibility to the cellular machineries which require DNA as a template. Histones thereby play a central role in transcription regulation, DNA repair, DNA replication and chromosomal stability. DNA accessibility is regulated via a complex set of post-translational modifications of histones, also called histone code, and nucleosome remodeling.</text>
</comment>
<comment type="function">
    <text evidence="6">Acipensins are antimicrobial peptides. Acipensins 1 and 2 have antibacterial activity against Gram-positive bacteria L.monocytogenes EGD (MIC are 1.1 uM and 1.0 uM, respectively) and S.aureus ATCC 33591 (MIC are 0.9 uM and 0.6 uM, respectively), against Gram-negative bacterium E.coli ML-35p (MIC are 0.7 uM and 0.3 uM, respectively) and antifungal activity against C.albicans 820 (MIC are 1.0 uM and 0.9 uM, respectively). Acipensin 6 has antibacterial activity against Gram-negative bacterium E.coli ML-35p (MIC=2.5 uM). Antimicrobial activity is reduced by high ionic strength. Acipensins 1, 2 and 6 have no hemolytic (up to 40 uM) or cytotoxic (up to 20 uM) effects on human cells in vitro.</text>
</comment>
<comment type="subunit">
    <text evidence="1">The nucleosome is a histone octamer containing two molecules each of H2A, H2B, H3 and H4 assembled in one H3-H4 heterotetramer and two H2A-H2B heterodimers. The octamer wraps approximately 147 bp of DNA.</text>
</comment>
<comment type="subcellular location">
    <molecule>Histone H2A</molecule>
    <subcellularLocation>
        <location evidence="1">Nucleus</location>
    </subcellularLocation>
    <subcellularLocation>
        <location evidence="1">Chromosome</location>
    </subcellularLocation>
</comment>
<comment type="PTM">
    <text evidence="4">Phosphorylation on Ser-2 is enhanced during mitosis. Phosphorylation on Ser-2 directly represses transcription.</text>
</comment>
<comment type="mass spectrometry">
    <molecule>Acipensin 1</molecule>
    <text>Acipensin 1.</text>
</comment>
<comment type="mass spectrometry">
    <molecule>Acipensin 2</molecule>
    <text>Acipensin 2.</text>
</comment>
<comment type="mass spectrometry">
    <molecule>Acipensin 3</molecule>
    <text>Acipensin 3.</text>
</comment>
<comment type="mass spectrometry">
    <molecule>Acipensin 4</molecule>
    <text>Acipensin 4.</text>
</comment>
<comment type="mass spectrometry">
    <molecule>Acipensin 5</molecule>
    <text>Acipensin 5.</text>
</comment>
<comment type="mass spectrometry">
    <molecule>Acipensin 6</molecule>
    <text>Acipensin 6.</text>
</comment>
<comment type="similarity">
    <text evidence="8">Belongs to the histone H2A family.</text>
</comment>
<protein>
    <recommendedName>
        <fullName evidence="7">Histone H2A</fullName>
    </recommendedName>
    <component>
        <recommendedName>
            <fullName evidence="7">Acipensin 1</fullName>
            <shortName evidence="7">Ac1</shortName>
        </recommendedName>
    </component>
    <component>
        <recommendedName>
            <fullName evidence="7">Acipensin 2</fullName>
            <shortName evidence="7">Ac2</shortName>
        </recommendedName>
    </component>
    <component>
        <recommendedName>
            <fullName evidence="7">Acipensin 3</fullName>
            <shortName evidence="7">Ac3</shortName>
        </recommendedName>
    </component>
    <component>
        <recommendedName>
            <fullName evidence="7">Acipensin 4</fullName>
            <shortName evidence="7">Ac4</shortName>
        </recommendedName>
    </component>
    <component>
        <recommendedName>
            <fullName evidence="7">Acipensin 5</fullName>
            <shortName evidence="7">Ac5</shortName>
        </recommendedName>
    </component>
    <component>
        <recommendedName>
            <fullName evidence="7">Acipensin 6</fullName>
            <shortName evidence="7">Ac6</shortName>
        </recommendedName>
    </component>
</protein>
<proteinExistence type="evidence at protein level"/>
<dbReference type="SMR" id="C0HJQ3"/>
<dbReference type="iPTMnet" id="C0HJQ3"/>
<dbReference type="GO" id="GO:0000786">
    <property type="term" value="C:nucleosome"/>
    <property type="evidence" value="ECO:0007669"/>
    <property type="project" value="InterPro"/>
</dbReference>
<dbReference type="GO" id="GO:0005634">
    <property type="term" value="C:nucleus"/>
    <property type="evidence" value="ECO:0007669"/>
    <property type="project" value="UniProtKB-SubCell"/>
</dbReference>
<dbReference type="GO" id="GO:0003677">
    <property type="term" value="F:DNA binding"/>
    <property type="evidence" value="ECO:0007669"/>
    <property type="project" value="InterPro"/>
</dbReference>
<dbReference type="GO" id="GO:0046982">
    <property type="term" value="F:protein heterodimerization activity"/>
    <property type="evidence" value="ECO:0007669"/>
    <property type="project" value="InterPro"/>
</dbReference>
<dbReference type="GO" id="GO:0030527">
    <property type="term" value="F:structural constituent of chromatin"/>
    <property type="evidence" value="ECO:0007669"/>
    <property type="project" value="InterPro"/>
</dbReference>
<dbReference type="GO" id="GO:0042742">
    <property type="term" value="P:defense response to bacterium"/>
    <property type="evidence" value="ECO:0007669"/>
    <property type="project" value="UniProtKB-KW"/>
</dbReference>
<dbReference type="GO" id="GO:0050832">
    <property type="term" value="P:defense response to fungus"/>
    <property type="evidence" value="ECO:0007669"/>
    <property type="project" value="UniProtKB-KW"/>
</dbReference>
<dbReference type="GO" id="GO:0002376">
    <property type="term" value="P:immune system process"/>
    <property type="evidence" value="ECO:0007669"/>
    <property type="project" value="UniProtKB-KW"/>
</dbReference>
<dbReference type="GO" id="GO:0031640">
    <property type="term" value="P:killing of cells of another organism"/>
    <property type="evidence" value="ECO:0007669"/>
    <property type="project" value="UniProtKB-KW"/>
</dbReference>
<dbReference type="CDD" id="cd00074">
    <property type="entry name" value="HFD_H2A"/>
    <property type="match status" value="1"/>
</dbReference>
<dbReference type="FunFam" id="1.10.20.10:FF:000103">
    <property type="entry name" value="Histone H2A type 1"/>
    <property type="match status" value="1"/>
</dbReference>
<dbReference type="Gene3D" id="1.10.20.10">
    <property type="entry name" value="Histone, subunit A"/>
    <property type="match status" value="1"/>
</dbReference>
<dbReference type="InterPro" id="IPR009072">
    <property type="entry name" value="Histone-fold"/>
</dbReference>
<dbReference type="InterPro" id="IPR002119">
    <property type="entry name" value="Histone_H2A"/>
</dbReference>
<dbReference type="InterPro" id="IPR032458">
    <property type="entry name" value="Histone_H2A_CS"/>
</dbReference>
<dbReference type="PANTHER" id="PTHR23430">
    <property type="entry name" value="HISTONE H2A"/>
    <property type="match status" value="1"/>
</dbReference>
<dbReference type="PRINTS" id="PR00620">
    <property type="entry name" value="HISTONEH2A"/>
</dbReference>
<dbReference type="SMART" id="SM00414">
    <property type="entry name" value="H2A"/>
    <property type="match status" value="1"/>
</dbReference>
<dbReference type="SUPFAM" id="SSF47113">
    <property type="entry name" value="Histone-fold"/>
    <property type="match status" value="1"/>
</dbReference>
<dbReference type="PROSITE" id="PS00046">
    <property type="entry name" value="HISTONE_H2A"/>
    <property type="match status" value="1"/>
</dbReference>
<organism evidence="7">
    <name type="scientific">Acipenser gueldenstaedtii</name>
    <name type="common">Russian sturgeon</name>
    <name type="synonym">Danube sturgeon</name>
    <dbReference type="NCBI Taxonomy" id="7902"/>
    <lineage>
        <taxon>Eukaryota</taxon>
        <taxon>Metazoa</taxon>
        <taxon>Chordata</taxon>
        <taxon>Craniata</taxon>
        <taxon>Vertebrata</taxon>
        <taxon>Euteleostomi</taxon>
        <taxon>Actinopterygii</taxon>
        <taxon>Chondrostei</taxon>
        <taxon>Acipenseriformes</taxon>
        <taxon>Acipenseridae</taxon>
        <taxon>Acipenser</taxon>
    </lineage>
</organism>